<proteinExistence type="predicted"/>
<dbReference type="EMBL" id="Y10251">
    <property type="protein sequence ID" value="CAA71295.1"/>
    <property type="molecule type" value="Genomic_DNA"/>
</dbReference>
<dbReference type="EMBL" id="AE009439">
    <property type="protein sequence ID" value="AAM01225.1"/>
    <property type="molecule type" value="Genomic_DNA"/>
</dbReference>
<dbReference type="RefSeq" id="WP_011018380.1">
    <property type="nucleotide sequence ID" value="NC_003551.1"/>
</dbReference>
<dbReference type="SMR" id="P94948"/>
<dbReference type="STRING" id="190192.MK0008"/>
<dbReference type="PaxDb" id="190192-MK0008"/>
<dbReference type="EnsemblBacteria" id="AAM01225">
    <property type="protein sequence ID" value="AAM01225"/>
    <property type="gene ID" value="MK0008"/>
</dbReference>
<dbReference type="GeneID" id="1477310"/>
<dbReference type="KEGG" id="mka:MK0008"/>
<dbReference type="PATRIC" id="fig|190192.8.peg.8"/>
<dbReference type="HOGENOM" id="CLU_151801_2_0_2"/>
<dbReference type="InParanoid" id="P94948"/>
<dbReference type="OrthoDB" id="216309at2157"/>
<dbReference type="Proteomes" id="UP000001826">
    <property type="component" value="Chromosome"/>
</dbReference>
<dbReference type="GO" id="GO:0005829">
    <property type="term" value="C:cytosol"/>
    <property type="evidence" value="ECO:0007669"/>
    <property type="project" value="TreeGrafter"/>
</dbReference>
<dbReference type="Gene3D" id="3.40.1260.10">
    <property type="entry name" value="DsrEFH-like"/>
    <property type="match status" value="1"/>
</dbReference>
<dbReference type="InterPro" id="IPR027396">
    <property type="entry name" value="DsrEFH-like"/>
</dbReference>
<dbReference type="InterPro" id="IPR003787">
    <property type="entry name" value="Sulphur_relay_DsrE/F-like"/>
</dbReference>
<dbReference type="PANTHER" id="PTHR34874">
    <property type="entry name" value="PROTEIN YCHN"/>
    <property type="match status" value="1"/>
</dbReference>
<dbReference type="PANTHER" id="PTHR34874:SF1">
    <property type="entry name" value="PROTEIN YCHN"/>
    <property type="match status" value="1"/>
</dbReference>
<dbReference type="Pfam" id="PF02635">
    <property type="entry name" value="DsrE"/>
    <property type="match status" value="1"/>
</dbReference>
<dbReference type="SUPFAM" id="SSF75169">
    <property type="entry name" value="DsrEFH-like"/>
    <property type="match status" value="1"/>
</dbReference>
<organism>
    <name type="scientific">Methanopyrus kandleri (strain AV19 / DSM 6324 / JCM 9639 / NBRC 100938)</name>
    <dbReference type="NCBI Taxonomy" id="190192"/>
    <lineage>
        <taxon>Archaea</taxon>
        <taxon>Methanobacteriati</taxon>
        <taxon>Methanobacteriota</taxon>
        <taxon>Methanomada group</taxon>
        <taxon>Methanopyri</taxon>
        <taxon>Methanopyrales</taxon>
        <taxon>Methanopyraceae</taxon>
        <taxon>Methanopyrus</taxon>
    </lineage>
</organism>
<protein>
    <recommendedName>
        <fullName>Uncharacterized protein MK0008</fullName>
    </recommendedName>
</protein>
<sequence>MGTPEGIDVITVVISEAPYGQERAYTALRFALTALVEGEEVKIFLIEDGVFLGKKGQNPDEVPNYLELLEQCIEQGAEVKACGPCSKARGLSEEDFIEGVELATMHDLVNWVKESDNVIFF</sequence>
<comment type="similarity">
    <text evidence="1">To M.jannaschii MJ0989.</text>
</comment>
<reference key="1">
    <citation type="journal article" date="1997" name="Eur. J. Biochem.">
        <title>Overexpression of the coenzyme-F420-dependent N5,N10-methylenetetrahydromethanopterin dehydrogenase gene from the hyperthermophilic Methanopyrus kandleri.</title>
        <authorList>
            <person name="Klein A.R."/>
            <person name="Thauer R.K."/>
        </authorList>
    </citation>
    <scope>NUCLEOTIDE SEQUENCE [GENOMIC DNA]</scope>
</reference>
<reference key="2">
    <citation type="journal article" date="2002" name="Proc. Natl. Acad. Sci. U.S.A.">
        <title>The complete genome of hyperthermophile Methanopyrus kandleri AV19 and monophyly of archaeal methanogens.</title>
        <authorList>
            <person name="Slesarev A.I."/>
            <person name="Mezhevaya K.V."/>
            <person name="Makarova K.S."/>
            <person name="Polushin N.N."/>
            <person name="Shcherbinina O.V."/>
            <person name="Shakhova V.V."/>
            <person name="Belova G.I."/>
            <person name="Aravind L."/>
            <person name="Natale D.A."/>
            <person name="Rogozin I.B."/>
            <person name="Tatusov R.L."/>
            <person name="Wolf Y.I."/>
            <person name="Stetter K.O."/>
            <person name="Malykh A.G."/>
            <person name="Koonin E.V."/>
            <person name="Kozyavkin S.A."/>
        </authorList>
    </citation>
    <scope>NUCLEOTIDE SEQUENCE [LARGE SCALE GENOMIC DNA]</scope>
    <source>
        <strain>AV19 / DSM 6324 / JCM 9639 / NBRC 100938</strain>
    </source>
</reference>
<name>Y008_METKA</name>
<evidence type="ECO:0000305" key="1"/>
<keyword id="KW-1185">Reference proteome</keyword>
<gene>
    <name type="ordered locus">MK0008</name>
</gene>
<feature type="chain" id="PRO_0000107133" description="Uncharacterized protein MK0008">
    <location>
        <begin position="1"/>
        <end position="121"/>
    </location>
</feature>
<accession>P94948</accession>